<reference key="1">
    <citation type="journal article" date="2001" name="Biochim. Biophys. Acta">
        <title>Identification of human and mouse HIRA-interacting protein-5 (HIRIP5), two mammalian representatives in a family of phylogenetically conserved proteins with a role in the biogenesis of Fe/S proteins.</title>
        <authorList>
            <person name="Lorain S."/>
            <person name="Lecluse Y."/>
            <person name="Scamps C."/>
            <person name="Mattei M.-G."/>
            <person name="Lipinski M."/>
        </authorList>
    </citation>
    <scope>NUCLEOTIDE SEQUENCE [MRNA] (ISOFORM 3)</scope>
    <source>
        <tissue>Myeloid leukemia cell</tissue>
    </source>
</reference>
<reference key="2">
    <citation type="journal article" date="2003" name="Hum. Mol. Genet.">
        <title>The Lafora disease gene product laforin interacts with HIRIP5, a phylogenetically conserved protein containing a NifU-like domain.</title>
        <authorList>
            <person name="Ganesh S."/>
            <person name="Tsurutani N."/>
            <person name="Suzuki T."/>
            <person name="Ueda K."/>
            <person name="Agarwala K.L."/>
            <person name="Osada H."/>
            <person name="Delgado-Escueta A.V."/>
            <person name="Yamakawa K."/>
        </authorList>
    </citation>
    <scope>NUCLEOTIDE SEQUENCE [MRNA] (ISOFORM 1)</scope>
    <scope>INTERACTION WITH EPM2A</scope>
    <scope>SUBCELLULAR LOCATION</scope>
    <scope>TISSUE SPECIFICITY</scope>
    <scope>DEVELOPMENTAL STAGE</scope>
    <scope>VARIANT LYS-25</scope>
    <source>
        <tissue>Brain</tissue>
    </source>
</reference>
<reference key="3">
    <citation type="journal article" date="2003" name="Proc. Natl. Acad. Sci. U.S.A.">
        <title>Subcellular compartmentalization of human Nfu, an iron-sulfur cluster scaffold protein, and its ability to assemble a [4Fe-4S] cluster.</title>
        <authorList>
            <person name="Tong W.-H."/>
            <person name="Jameson G.N.L."/>
            <person name="Huynh B.H."/>
            <person name="Rouault T.A."/>
        </authorList>
    </citation>
    <scope>NUCLEOTIDE SEQUENCE [MRNA] (ISOFORMS 1 AND 3)</scope>
    <scope>FUNCTION</scope>
    <scope>SUBCELLULAR LOCATION</scope>
</reference>
<reference key="4">
    <citation type="journal article" date="2000" name="Genome Res.">
        <title>Identification of novel human genes evolutionarily conserved in Caenorhabditis elegans by comparative proteomics.</title>
        <authorList>
            <person name="Lai C.-H."/>
            <person name="Chou C.-Y."/>
            <person name="Ch'ang L.-Y."/>
            <person name="Liu C.-S."/>
            <person name="Lin W.-C."/>
        </authorList>
    </citation>
    <scope>NUCLEOTIDE SEQUENCE [LARGE SCALE MRNA] (ISOFORM 3)</scope>
</reference>
<reference key="5">
    <citation type="journal article" date="2004" name="Nat. Genet.">
        <title>Complete sequencing and characterization of 21,243 full-length human cDNAs.</title>
        <authorList>
            <person name="Ota T."/>
            <person name="Suzuki Y."/>
            <person name="Nishikawa T."/>
            <person name="Otsuki T."/>
            <person name="Sugiyama T."/>
            <person name="Irie R."/>
            <person name="Wakamatsu A."/>
            <person name="Hayashi K."/>
            <person name="Sato H."/>
            <person name="Nagai K."/>
            <person name="Kimura K."/>
            <person name="Makita H."/>
            <person name="Sekine M."/>
            <person name="Obayashi M."/>
            <person name="Nishi T."/>
            <person name="Shibahara T."/>
            <person name="Tanaka T."/>
            <person name="Ishii S."/>
            <person name="Yamamoto J."/>
            <person name="Saito K."/>
            <person name="Kawai Y."/>
            <person name="Isono Y."/>
            <person name="Nakamura Y."/>
            <person name="Nagahari K."/>
            <person name="Murakami K."/>
            <person name="Yasuda T."/>
            <person name="Iwayanagi T."/>
            <person name="Wagatsuma M."/>
            <person name="Shiratori A."/>
            <person name="Sudo H."/>
            <person name="Hosoiri T."/>
            <person name="Kaku Y."/>
            <person name="Kodaira H."/>
            <person name="Kondo H."/>
            <person name="Sugawara M."/>
            <person name="Takahashi M."/>
            <person name="Kanda K."/>
            <person name="Yokoi T."/>
            <person name="Furuya T."/>
            <person name="Kikkawa E."/>
            <person name="Omura Y."/>
            <person name="Abe K."/>
            <person name="Kamihara K."/>
            <person name="Katsuta N."/>
            <person name="Sato K."/>
            <person name="Tanikawa M."/>
            <person name="Yamazaki M."/>
            <person name="Ninomiya K."/>
            <person name="Ishibashi T."/>
            <person name="Yamashita H."/>
            <person name="Murakawa K."/>
            <person name="Fujimori K."/>
            <person name="Tanai H."/>
            <person name="Kimata M."/>
            <person name="Watanabe M."/>
            <person name="Hiraoka S."/>
            <person name="Chiba Y."/>
            <person name="Ishida S."/>
            <person name="Ono Y."/>
            <person name="Takiguchi S."/>
            <person name="Watanabe S."/>
            <person name="Yosida M."/>
            <person name="Hotuta T."/>
            <person name="Kusano J."/>
            <person name="Kanehori K."/>
            <person name="Takahashi-Fujii A."/>
            <person name="Hara H."/>
            <person name="Tanase T.-O."/>
            <person name="Nomura Y."/>
            <person name="Togiya S."/>
            <person name="Komai F."/>
            <person name="Hara R."/>
            <person name="Takeuchi K."/>
            <person name="Arita M."/>
            <person name="Imose N."/>
            <person name="Musashino K."/>
            <person name="Yuuki H."/>
            <person name="Oshima A."/>
            <person name="Sasaki N."/>
            <person name="Aotsuka S."/>
            <person name="Yoshikawa Y."/>
            <person name="Matsunawa H."/>
            <person name="Ichihara T."/>
            <person name="Shiohata N."/>
            <person name="Sano S."/>
            <person name="Moriya S."/>
            <person name="Momiyama H."/>
            <person name="Satoh N."/>
            <person name="Takami S."/>
            <person name="Terashima Y."/>
            <person name="Suzuki O."/>
            <person name="Nakagawa S."/>
            <person name="Senoh A."/>
            <person name="Mizoguchi H."/>
            <person name="Goto Y."/>
            <person name="Shimizu F."/>
            <person name="Wakebe H."/>
            <person name="Hishigaki H."/>
            <person name="Watanabe T."/>
            <person name="Sugiyama A."/>
            <person name="Takemoto M."/>
            <person name="Kawakami B."/>
            <person name="Yamazaki M."/>
            <person name="Watanabe K."/>
            <person name="Kumagai A."/>
            <person name="Itakura S."/>
            <person name="Fukuzumi Y."/>
            <person name="Fujimori Y."/>
            <person name="Komiyama M."/>
            <person name="Tashiro H."/>
            <person name="Tanigami A."/>
            <person name="Fujiwara T."/>
            <person name="Ono T."/>
            <person name="Yamada K."/>
            <person name="Fujii Y."/>
            <person name="Ozaki K."/>
            <person name="Hirao M."/>
            <person name="Ohmori Y."/>
            <person name="Kawabata A."/>
            <person name="Hikiji T."/>
            <person name="Kobatake N."/>
            <person name="Inagaki H."/>
            <person name="Ikema Y."/>
            <person name="Okamoto S."/>
            <person name="Okitani R."/>
            <person name="Kawakami T."/>
            <person name="Noguchi S."/>
            <person name="Itoh T."/>
            <person name="Shigeta K."/>
            <person name="Senba T."/>
            <person name="Matsumura K."/>
            <person name="Nakajima Y."/>
            <person name="Mizuno T."/>
            <person name="Morinaga M."/>
            <person name="Sasaki M."/>
            <person name="Togashi T."/>
            <person name="Oyama M."/>
            <person name="Hata H."/>
            <person name="Watanabe M."/>
            <person name="Komatsu T."/>
            <person name="Mizushima-Sugano J."/>
            <person name="Satoh T."/>
            <person name="Shirai Y."/>
            <person name="Takahashi Y."/>
            <person name="Nakagawa K."/>
            <person name="Okumura K."/>
            <person name="Nagase T."/>
            <person name="Nomura N."/>
            <person name="Kikuchi H."/>
            <person name="Masuho Y."/>
            <person name="Yamashita R."/>
            <person name="Nakai K."/>
            <person name="Yada T."/>
            <person name="Nakamura Y."/>
            <person name="Ohara O."/>
            <person name="Isogai T."/>
            <person name="Sugano S."/>
        </authorList>
    </citation>
    <scope>NUCLEOTIDE SEQUENCE [LARGE SCALE MRNA] (ISOFORMS 1 AND 2)</scope>
    <scope>VARIANT LYS-25</scope>
    <source>
        <tissue>Skeletal muscle</tissue>
    </source>
</reference>
<reference key="6">
    <citation type="journal article" date="2005" name="Nature">
        <title>Generation and annotation of the DNA sequences of human chromosomes 2 and 4.</title>
        <authorList>
            <person name="Hillier L.W."/>
            <person name="Graves T.A."/>
            <person name="Fulton R.S."/>
            <person name="Fulton L.A."/>
            <person name="Pepin K.H."/>
            <person name="Minx P."/>
            <person name="Wagner-McPherson C."/>
            <person name="Layman D."/>
            <person name="Wylie K."/>
            <person name="Sekhon M."/>
            <person name="Becker M.C."/>
            <person name="Fewell G.A."/>
            <person name="Delehaunty K.D."/>
            <person name="Miner T.L."/>
            <person name="Nash W.E."/>
            <person name="Kremitzki C."/>
            <person name="Oddy L."/>
            <person name="Du H."/>
            <person name="Sun H."/>
            <person name="Bradshaw-Cordum H."/>
            <person name="Ali J."/>
            <person name="Carter J."/>
            <person name="Cordes M."/>
            <person name="Harris A."/>
            <person name="Isak A."/>
            <person name="van Brunt A."/>
            <person name="Nguyen C."/>
            <person name="Du F."/>
            <person name="Courtney L."/>
            <person name="Kalicki J."/>
            <person name="Ozersky P."/>
            <person name="Abbott S."/>
            <person name="Armstrong J."/>
            <person name="Belter E.A."/>
            <person name="Caruso L."/>
            <person name="Cedroni M."/>
            <person name="Cotton M."/>
            <person name="Davidson T."/>
            <person name="Desai A."/>
            <person name="Elliott G."/>
            <person name="Erb T."/>
            <person name="Fronick C."/>
            <person name="Gaige T."/>
            <person name="Haakenson W."/>
            <person name="Haglund K."/>
            <person name="Holmes A."/>
            <person name="Harkins R."/>
            <person name="Kim K."/>
            <person name="Kruchowski S.S."/>
            <person name="Strong C.M."/>
            <person name="Grewal N."/>
            <person name="Goyea E."/>
            <person name="Hou S."/>
            <person name="Levy A."/>
            <person name="Martinka S."/>
            <person name="Mead K."/>
            <person name="McLellan M.D."/>
            <person name="Meyer R."/>
            <person name="Randall-Maher J."/>
            <person name="Tomlinson C."/>
            <person name="Dauphin-Kohlberg S."/>
            <person name="Kozlowicz-Reilly A."/>
            <person name="Shah N."/>
            <person name="Swearengen-Shahid S."/>
            <person name="Snider J."/>
            <person name="Strong J.T."/>
            <person name="Thompson J."/>
            <person name="Yoakum M."/>
            <person name="Leonard S."/>
            <person name="Pearman C."/>
            <person name="Trani L."/>
            <person name="Radionenko M."/>
            <person name="Waligorski J.E."/>
            <person name="Wang C."/>
            <person name="Rock S.M."/>
            <person name="Tin-Wollam A.-M."/>
            <person name="Maupin R."/>
            <person name="Latreille P."/>
            <person name="Wendl M.C."/>
            <person name="Yang S.-P."/>
            <person name="Pohl C."/>
            <person name="Wallis J.W."/>
            <person name="Spieth J."/>
            <person name="Bieri T.A."/>
            <person name="Berkowicz N."/>
            <person name="Nelson J.O."/>
            <person name="Osborne J."/>
            <person name="Ding L."/>
            <person name="Meyer R."/>
            <person name="Sabo A."/>
            <person name="Shotland Y."/>
            <person name="Sinha P."/>
            <person name="Wohldmann P.E."/>
            <person name="Cook L.L."/>
            <person name="Hickenbotham M.T."/>
            <person name="Eldred J."/>
            <person name="Williams D."/>
            <person name="Jones T.A."/>
            <person name="She X."/>
            <person name="Ciccarelli F.D."/>
            <person name="Izaurralde E."/>
            <person name="Taylor J."/>
            <person name="Schmutz J."/>
            <person name="Myers R.M."/>
            <person name="Cox D.R."/>
            <person name="Huang X."/>
            <person name="McPherson J.D."/>
            <person name="Mardis E.R."/>
            <person name="Clifton S.W."/>
            <person name="Warren W.C."/>
            <person name="Chinwalla A.T."/>
            <person name="Eddy S.R."/>
            <person name="Marra M.A."/>
            <person name="Ovcharenko I."/>
            <person name="Furey T.S."/>
            <person name="Miller W."/>
            <person name="Eichler E.E."/>
            <person name="Bork P."/>
            <person name="Suyama M."/>
            <person name="Torrents D."/>
            <person name="Waterston R.H."/>
            <person name="Wilson R.K."/>
        </authorList>
    </citation>
    <scope>NUCLEOTIDE SEQUENCE [LARGE SCALE GENOMIC DNA]</scope>
</reference>
<reference key="7">
    <citation type="submission" date="2005-09" db="EMBL/GenBank/DDBJ databases">
        <authorList>
            <person name="Mural R.J."/>
            <person name="Istrail S."/>
            <person name="Sutton G.G."/>
            <person name="Florea L."/>
            <person name="Halpern A.L."/>
            <person name="Mobarry C.M."/>
            <person name="Lippert R."/>
            <person name="Walenz B."/>
            <person name="Shatkay H."/>
            <person name="Dew I."/>
            <person name="Miller J.R."/>
            <person name="Flanigan M.J."/>
            <person name="Edwards N.J."/>
            <person name="Bolanos R."/>
            <person name="Fasulo D."/>
            <person name="Halldorsson B.V."/>
            <person name="Hannenhalli S."/>
            <person name="Turner R."/>
            <person name="Yooseph S."/>
            <person name="Lu F."/>
            <person name="Nusskern D.R."/>
            <person name="Shue B.C."/>
            <person name="Zheng X.H."/>
            <person name="Zhong F."/>
            <person name="Delcher A.L."/>
            <person name="Huson D.H."/>
            <person name="Kravitz S.A."/>
            <person name="Mouchard L."/>
            <person name="Reinert K."/>
            <person name="Remington K.A."/>
            <person name="Clark A.G."/>
            <person name="Waterman M.S."/>
            <person name="Eichler E.E."/>
            <person name="Adams M.D."/>
            <person name="Hunkapiller M.W."/>
            <person name="Myers E.W."/>
            <person name="Venter J.C."/>
        </authorList>
    </citation>
    <scope>NUCLEOTIDE SEQUENCE [LARGE SCALE GENOMIC DNA]</scope>
</reference>
<reference key="8">
    <citation type="journal article" date="2004" name="Genome Res.">
        <title>The status, quality, and expansion of the NIH full-length cDNA project: the Mammalian Gene Collection (MGC).</title>
        <authorList>
            <consortium name="The MGC Project Team"/>
        </authorList>
    </citation>
    <scope>NUCLEOTIDE SEQUENCE [LARGE SCALE MRNA] (ISOFORM 1)</scope>
    <source>
        <tissue>Cerebellum</tissue>
    </source>
</reference>
<reference key="9">
    <citation type="journal article" date="2011" name="Am. J. Hum. Genet.">
        <title>Mutations in iron-sulfur cluster scaffold genes NFU1 and BOLA3 cause a fatal deficiency of multiple respiratory chain and 2-oxoacid dehydrogenase enzymes.</title>
        <authorList>
            <person name="Cameron J.M."/>
            <person name="Janer A."/>
            <person name="Levandovskiy V."/>
            <person name="Mackay N."/>
            <person name="Rouault T.A."/>
            <person name="Tong W.H."/>
            <person name="Ogilvie I."/>
            <person name="Shoubridge E.A."/>
            <person name="Robinson B.H."/>
        </authorList>
    </citation>
    <scope>SUBCELLULAR LOCATION</scope>
    <scope>INVOLVEMENT IN MMDS1</scope>
</reference>
<reference key="10">
    <citation type="journal article" date="2011" name="BMC Syst. Biol.">
        <title>Initial characterization of the human central proteome.</title>
        <authorList>
            <person name="Burkard T.R."/>
            <person name="Planyavsky M."/>
            <person name="Kaupe I."/>
            <person name="Breitwieser F.P."/>
            <person name="Buerckstuemmer T."/>
            <person name="Bennett K.L."/>
            <person name="Superti-Furga G."/>
            <person name="Colinge J."/>
        </authorList>
    </citation>
    <scope>IDENTIFICATION BY MASS SPECTROMETRY [LARGE SCALE ANALYSIS]</scope>
</reference>
<reference key="11">
    <citation type="journal article" date="2014" name="J. Proteomics">
        <title>An enzyme assisted RP-RPLC approach for in-depth analysis of human liver phosphoproteome.</title>
        <authorList>
            <person name="Bian Y."/>
            <person name="Song C."/>
            <person name="Cheng K."/>
            <person name="Dong M."/>
            <person name="Wang F."/>
            <person name="Huang J."/>
            <person name="Sun D."/>
            <person name="Wang L."/>
            <person name="Ye M."/>
            <person name="Zou H."/>
        </authorList>
    </citation>
    <scope>IDENTIFICATION BY MASS SPECTROMETRY [LARGE SCALE ANALYSIS]</scope>
    <source>
        <tissue>Liver</tissue>
    </source>
</reference>
<reference key="12">
    <citation type="journal article" date="2014" name="Mol. Cell. Proteomics">
        <title>Immunoaffinity enrichment and mass spectrometry analysis of protein methylation.</title>
        <authorList>
            <person name="Guo A."/>
            <person name="Gu H."/>
            <person name="Zhou J."/>
            <person name="Mulhern D."/>
            <person name="Wang Y."/>
            <person name="Lee K.A."/>
            <person name="Yang V."/>
            <person name="Aguiar M."/>
            <person name="Kornhauser J."/>
            <person name="Jia X."/>
            <person name="Ren J."/>
            <person name="Beausoleil S.A."/>
            <person name="Silva J.C."/>
            <person name="Vemulapalli V."/>
            <person name="Bedford M.T."/>
            <person name="Comb M.J."/>
        </authorList>
    </citation>
    <scope>IDENTIFICATION BY MASS SPECTROMETRY [LARGE SCALE ANALYSIS]</scope>
    <source>
        <tissue>Colon carcinoma</tissue>
    </source>
</reference>
<reference key="13">
    <citation type="journal article" date="2015" name="Proteomics">
        <title>N-terminome analysis of the human mitochondrial proteome.</title>
        <authorList>
            <person name="Vaca Jacome A.S."/>
            <person name="Rabilloud T."/>
            <person name="Schaeffer-Reiss C."/>
            <person name="Rompais M."/>
            <person name="Ayoub D."/>
            <person name="Lane L."/>
            <person name="Bairoch A."/>
            <person name="Van Dorsselaer A."/>
            <person name="Carapito C."/>
        </authorList>
    </citation>
    <scope>IDENTIFICATION BY MASS SPECTROMETRY [LARGE SCALE ANALYSIS]</scope>
</reference>
<reference key="14">
    <citation type="journal article" date="2016" name="Elife">
        <title>Mitochondrial Bol1 and Bol3 function as assembly factors for specific iron-sulfur proteins.</title>
        <authorList>
            <person name="Uzarska M.A."/>
            <person name="Nasta V."/>
            <person name="Weiler B.D."/>
            <person name="Spantgar F."/>
            <person name="Ciofi-Baffoni S."/>
            <person name="Saviello M.R."/>
            <person name="Gonnelli L."/>
            <person name="Muehlenhoff U."/>
            <person name="Banci L."/>
            <person name="Lill R."/>
        </authorList>
    </citation>
    <scope>INTERACTION WITH BOLA3</scope>
</reference>
<reference key="15">
    <citation type="journal article" date="2016" name="Mitochondrion">
        <title>Mitochondrial Hspa9/Mortalin regulates erythroid differentiation via iron-sulfur cluster assembly.</title>
        <authorList>
            <person name="Shan Y."/>
            <person name="Cortopassi G."/>
        </authorList>
    </citation>
    <scope>INTERACTION WITH HSPA9</scope>
</reference>
<reference key="16">
    <citation type="journal article" date="2016" name="Structure">
        <title>Structural/functional properties of human NFU1, an intermediate [4Fe-4S] carrier in human mitochondrial iron-sulfur cluster biogenesis.</title>
        <authorList>
            <person name="Cai K."/>
            <person name="Liu G."/>
            <person name="Frederick R.O."/>
            <person name="Xiao R."/>
            <person name="Montelione G.T."/>
            <person name="Markley J.L."/>
        </authorList>
    </citation>
    <scope>STRUCTURE BY NMR OF 59-155</scope>
    <scope>SUBUNIT</scope>
    <scope>FUNCTION</scope>
</reference>
<reference key="17">
    <citation type="journal article" date="2011" name="Am. J. Hum. Genet.">
        <title>A fatal mitochondrial disease is associated with defective NFU1 function in the maturation of a subset of mitochondrial Fe-S proteins.</title>
        <authorList>
            <person name="Navarro-Sastre A."/>
            <person name="Tort F."/>
            <person name="Stehling O."/>
            <person name="Uzarska M.A."/>
            <person name="Arranz J.A."/>
            <person name="Del Toro M."/>
            <person name="Labayru M.T."/>
            <person name="Landa J."/>
            <person name="Font A."/>
            <person name="Garcia-Villoria J."/>
            <person name="Merinero B."/>
            <person name="Ugarte M."/>
            <person name="Gutierrez-Solana L.G."/>
            <person name="Campistol J."/>
            <person name="Garcia-Cazorla A."/>
            <person name="Vaquerizo J."/>
            <person name="Riudor E."/>
            <person name="Briones P."/>
            <person name="Elpeleg O."/>
            <person name="Ribes A."/>
            <person name="Lill R."/>
        </authorList>
    </citation>
    <scope>VARIANT MMDS1 CYS-208</scope>
</reference>
<reference key="18">
    <citation type="journal article" date="2014" name="Front. Genet.">
        <title>Cavitating leukoencephalopathy with multiple mitochondrial dysfunction syndrome and NFU1 mutations.</title>
        <authorList>
            <person name="Invernizzi F."/>
            <person name="Ardissone A."/>
            <person name="Lamantea E."/>
            <person name="Garavaglia B."/>
            <person name="Zeviani M."/>
            <person name="Farina L."/>
            <person name="Ghezzi D."/>
            <person name="Moroni I."/>
        </authorList>
    </citation>
    <scope>VARIANTS MMDS1 ARG-189 AND PHE-210</scope>
</reference>
<reference key="19">
    <citation type="journal article" date="2015" name="Front. Genet.">
        <title>Clinical, biochemical, and genetic spectrum of seven patients with NFU1 deficiency.</title>
        <authorList>
            <person name="Ahting U."/>
            <person name="Mayr J.A."/>
            <person name="Vanlander A.V."/>
            <person name="Hardy S.A."/>
            <person name="Santra S."/>
            <person name="Makowski C."/>
            <person name="Alston C.L."/>
            <person name="Zimmermann F.A."/>
            <person name="Abela L."/>
            <person name="Plecko B."/>
            <person name="Rohrbach M."/>
            <person name="Spranger S."/>
            <person name="Seneca S."/>
            <person name="Rolinski B."/>
            <person name="Hagendorff A."/>
            <person name="Hempel M."/>
            <person name="Sperl W."/>
            <person name="Meitinger T."/>
            <person name="Smet J."/>
            <person name="Taylor R.W."/>
            <person name="Van Coster R."/>
            <person name="Freisinger P."/>
            <person name="Prokisch H."/>
            <person name="Haack T.B."/>
        </authorList>
    </citation>
    <scope>VARIANTS MMDS1 PRO-21; TRP-182; ARG-189; ARG-190 AND CYS-208</scope>
    <scope>CHARACTERIZATION OF VARIANTS MMDS1 PRO-21; TRP-182 AND CYS-208</scope>
</reference>
<reference key="20">
    <citation type="journal article" date="2017" name="FEBS J.">
        <title>Understanding the molecular basis for multiple mitochondrial dysfunctions syndrome 1 (MMDS1): impact of a disease-causing Gly189Arg substitution on NFU1.</title>
        <authorList>
            <person name="Wesley N.A."/>
            <person name="Wachnowsky C."/>
            <person name="Fidai I."/>
            <person name="Cowan J.A."/>
        </authorList>
    </citation>
    <scope>VARIANT MMDS1 ARG-189</scope>
    <scope>CHARACTERIZATION OF VARIANT MMDS1 ARG-189</scope>
    <scope>MUTAGENESIS OF GLY-189</scope>
    <scope>FUNCTION</scope>
</reference>
<reference key="21">
    <citation type="journal article" date="2017" name="J. Mol. Biol.">
        <title>Understanding the Molecular Basis of Multiple Mitochondrial Dysfunctions Syndrome 1 (MMDS1)-Impact of a Disease-Causing Gly208Cys Substitution on Structure and Activity of NFU1 in the Fe/S Cluster Biosynthetic Pathway.</title>
        <authorList>
            <person name="Wachnowsky C."/>
            <person name="Wesley N.A."/>
            <person name="Fidai I."/>
            <person name="Cowan J.A."/>
        </authorList>
    </citation>
    <scope>CHARACTERIZATION OF VARIANT MMDS1 CYS-208</scope>
</reference>
<reference key="22">
    <citation type="journal article" date="2022" name="Ann. Clin. Transl. Neurol.">
        <title>Phenotypic continuum of NFU1-related disorders.</title>
        <authorList>
            <person name="Kaiyrzhanov R."/>
            <person name="Zaki M.S."/>
            <person name="Lau T."/>
            <person name="Sen S."/>
            <person name="Azizimalamiri R."/>
            <person name="Zamani M."/>
            <person name="Sayin G.Y."/>
            <person name="Hilander T."/>
            <person name="Efthymiou S."/>
            <person name="Chelban V."/>
            <person name="Brown R."/>
            <person name="Thompson K."/>
            <person name="Scarano M.I."/>
            <person name="Ganesh J."/>
            <person name="Koneev K."/>
            <person name="Guelacar I.M."/>
            <person name="Person R."/>
            <person name="Sadykova D."/>
            <person name="Maidyrov Y."/>
            <person name="Seifi T."/>
            <person name="Zadagali A."/>
            <person name="Bernard G."/>
            <person name="Allis K."/>
            <person name="Elloumi H.Z."/>
            <person name="Lindy A."/>
            <person name="Taghiabadi E."/>
            <person name="Verma S."/>
            <person name="Logan R."/>
            <person name="Kirmse B."/>
            <person name="Bai R."/>
            <person name="Khalaf S.M."/>
            <person name="Abdel-Hamid M.S."/>
            <person name="Sedaghat A."/>
            <person name="Shariati G."/>
            <person name="Issa M."/>
            <person name="Zeighami J."/>
            <person name="Elbendary H.M."/>
            <person name="Brown G."/>
            <person name="Taylor R.W."/>
            <person name="Galehdari H."/>
            <person name="Gleeson J.J."/>
            <person name="Carroll C.J."/>
            <person name="Cowan J.A."/>
            <person name="Moreno-De-Luca A."/>
            <person name="Houlden H."/>
            <person name="Maroofian R."/>
        </authorList>
    </citation>
    <scope>VARIANTS SPG93 SER-88; VAL-99; PRO-100; GLY-101; ALA-121; PRO-133; ARG-183; ARG-189; PHE-210 AND LEU-241</scope>
    <scope>INVOLVEMENT IN SPG93</scope>
</reference>
<name>NFU1_HUMAN</name>
<feature type="transit peptide" description="Mitochondrion" evidence="1">
    <location>
        <begin position="1"/>
        <end position="9"/>
    </location>
</feature>
<feature type="chain" id="PRO_0000166191" description="NFU1 iron-sulfur cluster scaffold homolog, mitochondrial">
    <location>
        <begin position="10"/>
        <end position="254"/>
    </location>
</feature>
<feature type="region of interest" description="NifU">
    <location>
        <begin position="173"/>
        <end position="241"/>
    </location>
</feature>
<feature type="binding site" evidence="20">
    <location>
        <position position="210"/>
    </location>
    <ligand>
        <name>[4Fe-4S] cluster</name>
        <dbReference type="ChEBI" id="CHEBI:49883"/>
        <note>ligand shared between dimeric partners</note>
    </ligand>
</feature>
<feature type="binding site" evidence="20">
    <location>
        <position position="213"/>
    </location>
    <ligand>
        <name>[4Fe-4S] cluster</name>
        <dbReference type="ChEBI" id="CHEBI:49883"/>
        <note>ligand shared between dimeric partners</note>
    </ligand>
</feature>
<feature type="splice variant" id="VSP_041224" description="In isoform 2." evidence="18">
    <location>
        <begin position="1"/>
        <end position="141"/>
    </location>
</feature>
<feature type="splice variant" id="VSP_041225" description="In isoform 3." evidence="15 16 17">
    <location>
        <begin position="1"/>
        <end position="24"/>
    </location>
</feature>
<feature type="sequence variant" id="VAR_079757" description="In MMDS1; patient's skeletal muscles and fibroblasts show deficiency of mitochondrial respiratory chain complexes; dbSNP:rs776875884." evidence="8">
    <original>R</original>
    <variation>P</variation>
    <location>
        <position position="21"/>
    </location>
</feature>
<feature type="sequence variant" id="VAR_044429" description="In dbSNP:rs4453725." evidence="3 4">
    <original>M</original>
    <variation>K</variation>
    <location>
        <position position="25"/>
    </location>
</feature>
<feature type="sequence variant" id="VAR_089997" description="In SPG93; uncertain significance." evidence="14">
    <original>F</original>
    <variation>S</variation>
    <location>
        <position position="88"/>
    </location>
</feature>
<feature type="sequence variant" id="VAR_089998" description="In SPG93; uncertain significance." evidence="14">
    <original>L</original>
    <variation>V</variation>
    <location>
        <position position="99"/>
    </location>
</feature>
<feature type="sequence variant" id="VAR_089999" description="In SPG93; uncertain significance; dbSNP:rs1279585557." evidence="14">
    <original>A</original>
    <variation>P</variation>
    <location>
        <position position="100"/>
    </location>
</feature>
<feature type="sequence variant" id="VAR_090000" description="In SPG93; uncertain significance; dbSNP:rs2104792930." evidence="14">
    <original>R</original>
    <variation>G</variation>
    <location>
        <position position="101"/>
    </location>
</feature>
<feature type="sequence variant" id="VAR_090001" description="In SPG93; likely pathogenic." evidence="14">
    <original>V</original>
    <variation>A</variation>
    <location>
        <position position="121"/>
    </location>
</feature>
<feature type="sequence variant" id="VAR_090002" description="In SPG93; uncertain significance; dbSNP:rs770896590." evidence="14">
    <original>L</original>
    <variation>P</variation>
    <location>
        <position position="133"/>
    </location>
</feature>
<feature type="sequence variant" id="VAR_079758" description="In MMDS1; patient's skin fibroblasts show deficiency of lipoic acid synthase and reduced lipoic acid content; dbSNP:rs1354126704." evidence="8">
    <original>R</original>
    <variation>W</variation>
    <location>
        <position position="182"/>
    </location>
</feature>
<feature type="sequence variant" id="VAR_090003" description="In SPG93; likely pathogenic; dbSNP:rs1156891721." evidence="14">
    <original>P</original>
    <variation>R</variation>
    <location>
        <position position="183"/>
    </location>
</feature>
<feature type="sequence variant" id="VAR_079759" description="In MMDS1 and SPG93; pathogenic; alters protein structure; increases likelihood of existing as monomer; decreases ability to receive a Fe/S clusters from donor proteins; decreases delivery rates of [2Fe-2S] cluster to target proteins; dbSNP:rs2104735490." evidence="7 8 13 14">
    <original>G</original>
    <variation>R</variation>
    <location>
        <position position="189"/>
    </location>
</feature>
<feature type="sequence variant" id="VAR_079760" description="In MMDS1; uncertain significance." evidence="8">
    <original>G</original>
    <variation>R</variation>
    <location>
        <position position="190"/>
    </location>
</feature>
<feature type="sequence variant" id="VAR_066639" description="In MMDS1; patient's skeletal muscles and fibroblasts show deficiency of mitochondrial respiratory chain complexes; increases homodimerization; unable to receive a Fe/S clusters from donor proteins; changes delivery rates of [2Fe-2S] cluster to target proteins; dbSNP:rs374514431." evidence="6 8 12">
    <original>G</original>
    <variation>C</variation>
    <location>
        <position position="208"/>
    </location>
</feature>
<feature type="sequence variant" id="VAR_090004" description="In MMDS1 and SPG93; likely pathogenic; dbSNP:rs201634470." evidence="7 14">
    <original>C</original>
    <variation>F</variation>
    <location>
        <position position="210"/>
    </location>
</feature>
<feature type="sequence variant" id="VAR_090005" description="In SPG93; uncertain significance." evidence="14">
    <original>V</original>
    <variation>L</variation>
    <location>
        <position position="241"/>
    </location>
</feature>
<feature type="mutagenesis site" description="Alters protein structure. Increases likelihood of existing as monomer. Decreases ability to receive a Fe/S clusters from donor proteins. Decreases delivery rates of [2Fe-2S] cluster to target proteins." evidence="13">
    <original>G</original>
    <variation>A</variation>
    <location>
        <position position="189"/>
    </location>
</feature>
<feature type="mutagenesis site" description="Alters protein structure. Increases likelihood of existing as monomer. Decreases ability to receive a Fe/S clusters from donor proteins. Decreases delivery rates of [2Fe-2S] cluster to target proteins." evidence="13">
    <original>G</original>
    <variation>K</variation>
    <location>
        <position position="189"/>
    </location>
</feature>
<feature type="sequence conflict" description="In Ref. 4; AAD27742." evidence="19" ref="4">
    <original>S</original>
    <variation>P</variation>
    <location>
        <position position="158"/>
    </location>
</feature>
<feature type="strand" evidence="21">
    <location>
        <begin position="62"/>
        <end position="64"/>
    </location>
</feature>
<feature type="strand" evidence="21">
    <location>
        <begin position="71"/>
        <end position="75"/>
    </location>
</feature>
<feature type="strand" evidence="21">
    <location>
        <begin position="80"/>
        <end position="83"/>
    </location>
</feature>
<feature type="strand" evidence="21">
    <location>
        <begin position="86"/>
        <end position="88"/>
    </location>
</feature>
<feature type="helix" evidence="21">
    <location>
        <begin position="93"/>
        <end position="96"/>
    </location>
</feature>
<feature type="helix" evidence="21">
    <location>
        <begin position="98"/>
        <end position="103"/>
    </location>
</feature>
<feature type="strand" evidence="21">
    <location>
        <begin position="109"/>
        <end position="115"/>
    </location>
</feature>
<feature type="strand" evidence="21">
    <location>
        <begin position="118"/>
        <end position="125"/>
    </location>
</feature>
<feature type="helix" evidence="21">
    <location>
        <begin position="130"/>
        <end position="147"/>
    </location>
</feature>
<feature type="helix" evidence="22">
    <location>
        <begin position="167"/>
        <end position="188"/>
    </location>
</feature>
<feature type="strand" evidence="22">
    <location>
        <begin position="192"/>
        <end position="198"/>
    </location>
</feature>
<feature type="strand" evidence="22">
    <location>
        <begin position="201"/>
        <end position="206"/>
    </location>
</feature>
<feature type="turn" evidence="22">
    <location>
        <begin position="208"/>
        <end position="212"/>
    </location>
</feature>
<feature type="helix" evidence="22">
    <location>
        <begin position="214"/>
        <end position="231"/>
    </location>
</feature>
<feature type="strand" evidence="22">
    <location>
        <begin position="237"/>
        <end position="240"/>
    </location>
</feature>
<evidence type="ECO:0000255" key="1"/>
<evidence type="ECO:0000269" key="2">
    <source>
    </source>
</evidence>
<evidence type="ECO:0000269" key="3">
    <source>
    </source>
</evidence>
<evidence type="ECO:0000269" key="4">
    <source>
    </source>
</evidence>
<evidence type="ECO:0000269" key="5">
    <source>
    </source>
</evidence>
<evidence type="ECO:0000269" key="6">
    <source>
    </source>
</evidence>
<evidence type="ECO:0000269" key="7">
    <source>
    </source>
</evidence>
<evidence type="ECO:0000269" key="8">
    <source>
    </source>
</evidence>
<evidence type="ECO:0000269" key="9">
    <source>
    </source>
</evidence>
<evidence type="ECO:0000269" key="10">
    <source>
    </source>
</evidence>
<evidence type="ECO:0000269" key="11">
    <source>
    </source>
</evidence>
<evidence type="ECO:0000269" key="12">
    <source>
    </source>
</evidence>
<evidence type="ECO:0000269" key="13">
    <source>
    </source>
</evidence>
<evidence type="ECO:0000269" key="14">
    <source>
    </source>
</evidence>
<evidence type="ECO:0000303" key="15">
    <source>
    </source>
</evidence>
<evidence type="ECO:0000303" key="16">
    <source>
    </source>
</evidence>
<evidence type="ECO:0000303" key="17">
    <source>
    </source>
</evidence>
<evidence type="ECO:0000303" key="18">
    <source>
    </source>
</evidence>
<evidence type="ECO:0000305" key="19"/>
<evidence type="ECO:0000305" key="20">
    <source>
    </source>
</evidence>
<evidence type="ECO:0007829" key="21">
    <source>
        <dbReference type="PDB" id="2LTM"/>
    </source>
</evidence>
<evidence type="ECO:0007829" key="22">
    <source>
        <dbReference type="PDB" id="2M5O"/>
    </source>
</evidence>
<sequence>MAATARRGWGAAAVAAGLRRRFCHMLKNPYTIKKQPLHQFVQRPLFPLPAAFYHPVRYMFIQTQDTPNPNSLKFIPGKPVLETRTMDFPTPAAAFRSPLARQLFRIEGVKSVFFGPDFITVTKENEELDWNLLKPDIYATIMDFFASGLPLVTEETPSGEAGSEEDDEVVAMIKELLDTRIRPTVQEDGGDVIYKGFEDGIVQLKLQGSCTSCPSSIITLKNGIQNMLQFYIPEVEGVEQVMDDESDEKEANSP</sequence>
<accession>Q9UMS0</accession>
<accession>B4DUL9</accession>
<accession>Q53QE5</accession>
<accession>Q6VNZ8</accession>
<accession>Q7Z5B1</accession>
<accession>Q7Z5B2</accession>
<accession>Q9Y322</accession>
<proteinExistence type="evidence at protein level"/>
<organism>
    <name type="scientific">Homo sapiens</name>
    <name type="common">Human</name>
    <dbReference type="NCBI Taxonomy" id="9606"/>
    <lineage>
        <taxon>Eukaryota</taxon>
        <taxon>Metazoa</taxon>
        <taxon>Chordata</taxon>
        <taxon>Craniata</taxon>
        <taxon>Vertebrata</taxon>
        <taxon>Euteleostomi</taxon>
        <taxon>Mammalia</taxon>
        <taxon>Eutheria</taxon>
        <taxon>Euarchontoglires</taxon>
        <taxon>Primates</taxon>
        <taxon>Haplorrhini</taxon>
        <taxon>Catarrhini</taxon>
        <taxon>Hominidae</taxon>
        <taxon>Homo</taxon>
    </lineage>
</organism>
<comment type="function">
    <text evidence="2 11 13">Iron-sulfur cluster scaffold protein which can assemble [4Fe-4S] clusters and deliver them to target proteins.</text>
</comment>
<comment type="subunit">
    <text evidence="3 9 10 11">Monomer and homohexamer; the apo-NFU1 is a monomer, while the holo-NFU1 is a hexamer composed of a trimer of dimer that is probably linked by some 4Fe-4S cluster (PubMed:27818104). Interacts with HIRA and EPM2A/laforin (PubMed:12915448). Interacts with BOLA3 (PubMed:27532772). Interacts with HSPA9 (PubMed:26702583).</text>
</comment>
<comment type="interaction">
    <interactant intactId="EBI-725252">
        <id>Q9UMS0</id>
    </interactant>
    <interactant intactId="EBI-741181">
        <id>Q6RW13</id>
        <label>AGTRAP</label>
    </interactant>
    <organismsDiffer>false</organismsDiffer>
    <experiments>3</experiments>
</comment>
<comment type="interaction">
    <interactant intactId="EBI-725252">
        <id>Q9UMS0</id>
    </interactant>
    <interactant intactId="EBI-1220105">
        <id>P02654</id>
        <label>APOC1</label>
    </interactant>
    <organismsDiffer>false</organismsDiffer>
    <experiments>3</experiments>
</comment>
<comment type="interaction">
    <interactant intactId="EBI-725252">
        <id>Q9UMS0</id>
    </interactant>
    <interactant intactId="EBI-18302142">
        <id>P55056</id>
        <label>APOC4</label>
    </interactant>
    <organismsDiffer>false</organismsDiffer>
    <experiments>3</experiments>
</comment>
<comment type="interaction">
    <interactant intactId="EBI-725252">
        <id>Q9UMS0</id>
    </interactant>
    <interactant intactId="EBI-1049556">
        <id>Q9Y3E2</id>
        <label>BOLA1</label>
    </interactant>
    <organismsDiffer>false</organismsDiffer>
    <experiments>2</experiments>
</comment>
<comment type="interaction">
    <interactant intactId="EBI-725252">
        <id>Q9UMS0</id>
    </interactant>
    <interactant intactId="EBI-12086950">
        <id>Q53S33</id>
        <label>BOLA3</label>
    </interactant>
    <organismsDiffer>false</organismsDiffer>
    <experiments>2</experiments>
</comment>
<comment type="interaction">
    <interactant intactId="EBI-725252">
        <id>Q9UMS0</id>
    </interactant>
    <interactant intactId="EBI-739580">
        <id>Q13137</id>
        <label>CALCOCO2</label>
    </interactant>
    <organismsDiffer>false</organismsDiffer>
    <experiments>3</experiments>
</comment>
<comment type="interaction">
    <interactant intactId="EBI-725252">
        <id>Q9UMS0</id>
    </interactant>
    <interactant intactId="EBI-7062247">
        <id>Q9UHD4</id>
        <label>CIDEB</label>
    </interactant>
    <organismsDiffer>false</organismsDiffer>
    <experiments>3</experiments>
</comment>
<comment type="interaction">
    <interactant intactId="EBI-725252">
        <id>Q9UMS0</id>
    </interactant>
    <interactant intactId="EBI-11522780">
        <id>Q96DZ9-2</id>
        <label>CMTM5</label>
    </interactant>
    <organismsDiffer>false</organismsDiffer>
    <experiments>3</experiments>
</comment>
<comment type="interaction">
    <interactant intactId="EBI-725252">
        <id>Q9UMS0</id>
    </interactant>
    <interactant intactId="EBI-945751">
        <id>P38432</id>
        <label>COIL</label>
    </interactant>
    <organismsDiffer>false</organismsDiffer>
    <experiments>3</experiments>
</comment>
<comment type="interaction">
    <interactant intactId="EBI-725252">
        <id>Q9UMS0</id>
    </interactant>
    <interactant intactId="EBI-12878374">
        <id>Q9BSY9</id>
        <label>DESI2</label>
    </interactant>
    <organismsDiffer>false</organismsDiffer>
    <experiments>3</experiments>
</comment>
<comment type="interaction">
    <interactant intactId="EBI-725252">
        <id>Q9UMS0</id>
    </interactant>
    <interactant intactId="EBI-3918971">
        <id>Q9Y680</id>
        <label>FKBP7</label>
    </interactant>
    <organismsDiffer>false</organismsDiffer>
    <experiments>3</experiments>
</comment>
<comment type="interaction">
    <interactant intactId="EBI-725252">
        <id>Q9UMS0</id>
    </interactant>
    <interactant intactId="EBI-722444">
        <id>P21741</id>
        <label>MDK</label>
    </interactant>
    <organismsDiffer>false</organismsDiffer>
    <experiments>3</experiments>
</comment>
<comment type="interaction">
    <interactant intactId="EBI-725252">
        <id>Q9UMS0</id>
    </interactant>
    <interactant intactId="EBI-9675802">
        <id>Q6PF18</id>
        <label>MORN3</label>
    </interactant>
    <organismsDiffer>false</organismsDiffer>
    <experiments>3</experiments>
</comment>
<comment type="interaction">
    <interactant intactId="EBI-725252">
        <id>Q9UMS0</id>
    </interactant>
    <interactant intactId="EBI-17589229">
        <id>Q6NTF9-3</id>
        <label>RHBDD2</label>
    </interactant>
    <organismsDiffer>false</organismsDiffer>
    <experiments>3</experiments>
</comment>
<comment type="interaction">
    <interactant intactId="EBI-725252">
        <id>Q9UMS0</id>
    </interactant>
    <interactant intactId="EBI-742426">
        <id>Q9H190</id>
        <label>SDCBP2</label>
    </interactant>
    <organismsDiffer>false</organismsDiffer>
    <experiments>3</experiments>
</comment>
<comment type="interaction">
    <interactant intactId="EBI-725252">
        <id>Q9UMS0</id>
    </interactant>
    <interactant intactId="EBI-1105213">
        <id>Q9UBB9</id>
        <label>TFIP11</label>
    </interactant>
    <organismsDiffer>false</organismsDiffer>
    <experiments>6</experiments>
</comment>
<comment type="interaction">
    <interactant intactId="EBI-725252">
        <id>Q9UMS0</id>
    </interactant>
    <interactant intactId="EBI-740098">
        <id>P36406</id>
        <label>TRIM23</label>
    </interactant>
    <organismsDiffer>false</organismsDiffer>
    <experiments>3</experiments>
</comment>
<comment type="interaction">
    <interactant intactId="EBI-725252">
        <id>Q9UMS0</id>
    </interactant>
    <interactant intactId="EBI-4395732">
        <id>P0C7X2</id>
        <label>ZNF688</label>
    </interactant>
    <organismsDiffer>false</organismsDiffer>
    <experiments>3</experiments>
</comment>
<comment type="interaction">
    <interactant intactId="EBI-725252">
        <id>Q9UMS0</id>
    </interactant>
    <interactant intactId="EBI-8836980">
        <id>Q9BUG6</id>
        <label>ZSCAN5A</label>
    </interactant>
    <organismsDiffer>false</organismsDiffer>
    <experiments>3</experiments>
</comment>
<comment type="interaction">
    <interactant intactId="EBI-725252">
        <id>Q9UMS0</id>
    </interactant>
    <interactant intactId="EBI-6248094">
        <id>Q9Q2G4</id>
        <label>ORF</label>
    </interactant>
    <organismsDiffer>true</organismsDiffer>
    <experiments>3</experiments>
</comment>
<comment type="subcellular location">
    <subcellularLocation>
        <location>Mitochondrion</location>
    </subcellularLocation>
    <subcellularLocation>
        <location>Cytoplasm</location>
        <location>Cytosol</location>
    </subcellularLocation>
</comment>
<comment type="alternative products">
    <event type="alternative splicing"/>
    <isoform>
        <id>Q9UMS0-1</id>
        <name>1</name>
        <sequence type="displayed"/>
    </isoform>
    <isoform>
        <id>Q9UMS0-2</id>
        <name>2</name>
        <sequence type="described" ref="VSP_041224"/>
    </isoform>
    <isoform>
        <id>Q9UMS0-3</id>
        <name>3</name>
        <sequence type="described" ref="VSP_041225"/>
    </isoform>
</comment>
<comment type="tissue specificity">
    <text evidence="3">Ubiquitous. Expression in adult lung is weak compared to fetal lung.</text>
</comment>
<comment type="developmental stage">
    <text evidence="3">Expressed in embryo and adult.</text>
</comment>
<comment type="disease" evidence="5 6 7 8 12 13">
    <disease id="DI-03293">
        <name>Multiple mitochondrial dysfunctions syndrome 1</name>
        <acronym>MMDS1</acronym>
        <description>A severe disorder of systemic energy metabolism, resulting in weakness, respiratory failure, lack of neurologic development, lactic acidosis, hyperglycinemia and early death. Some patients show failure to thrive, pulmonary hypertension, hypotonia and irritability. Biochemical features include severe combined deficiency of the 2-oxoacid dehydrogenases, defective lipoic acid synthesis and reduction in activity of mitochondrial respiratory chain complexes.</description>
        <dbReference type="MIM" id="605711"/>
    </disease>
    <text>The disease is caused by variants affecting the gene represented in this entry.</text>
</comment>
<comment type="disease" evidence="14">
    <disease id="DI-06935">
        <name>Spastic paraplegia 93, autosomal recessive</name>
        <acronym>SPG93</acronym>
        <description>A form of spastic paraplegia, a neurodegenerative disorder characterized by a slow, gradual, progressive weakness and spasticity of the lower limbs. Rate of progression and the severity of symptoms are quite variable. Initial symptoms may include difficulty with balance, weakness and stiffness in the legs, muscle spasms, and dragging the toes when walking. In some forms of the disorder, bladder symptoms (such as incontinence) may appear, or the weakness and stiffness may spread to other parts of the body. Some SPG93 patients have neurodevelopmental delay with severe hypotonia.</description>
        <dbReference type="MIM" id="620938"/>
    </disease>
    <text>The disease is caused by variants affecting the gene represented in this entry.</text>
</comment>
<comment type="similarity">
    <text evidence="19">Belongs to the NifU family.</text>
</comment>
<comment type="sequence caution" evidence="19">
    <conflict type="frameshift">
        <sequence resource="EMBL-CDS" id="AAD27742"/>
    </conflict>
</comment>
<comment type="sequence caution" evidence="19">
    <conflict type="erroneous gene model prediction">
        <sequence resource="EMBL-CDS" id="AAY14828"/>
    </conflict>
</comment>
<comment type="sequence caution" evidence="19">
    <conflict type="erroneous initiation">
        <sequence resource="EMBL-CDS" id="BAG36716"/>
    </conflict>
    <text>Truncated N-terminus.</text>
</comment>
<comment type="sequence caution" evidence="19">
    <conflict type="erroneous initiation">
        <sequence resource="EMBL-CDS" id="CAB53015"/>
    </conflict>
    <text>Truncated N-terminus.</text>
</comment>
<protein>
    <recommendedName>
        <fullName>NFU1 iron-sulfur cluster scaffold homolog, mitochondrial</fullName>
    </recommendedName>
    <alternativeName>
        <fullName evidence="16">HIRA-interacting protein 5</fullName>
    </alternativeName>
</protein>
<keyword id="KW-0002">3D-structure</keyword>
<keyword id="KW-0025">Alternative splicing</keyword>
<keyword id="KW-0963">Cytoplasm</keyword>
<keyword id="KW-0225">Disease variant</keyword>
<keyword id="KW-0890">Hereditary spastic paraplegia</keyword>
<keyword id="KW-0408">Iron</keyword>
<keyword id="KW-0411">Iron-sulfur</keyword>
<keyword id="KW-0479">Metal-binding</keyword>
<keyword id="KW-0496">Mitochondrion</keyword>
<keyword id="KW-0523">Neurodegeneration</keyword>
<keyword id="KW-1274">Primary mitochondrial disease</keyword>
<keyword id="KW-1267">Proteomics identification</keyword>
<keyword id="KW-1185">Reference proteome</keyword>
<keyword id="KW-0809">Transit peptide</keyword>
<gene>
    <name type="primary">NFU1</name>
    <name evidence="16" type="synonym">HIRIP5</name>
    <name evidence="15" type="ORF">CGI-33</name>
</gene>
<dbReference type="EMBL" id="AJ132584">
    <property type="protein sequence ID" value="CAB53015.1"/>
    <property type="status" value="ALT_INIT"/>
    <property type="molecule type" value="mRNA"/>
</dbReference>
<dbReference type="EMBL" id="AY335194">
    <property type="protein sequence ID" value="AAQ73784.1"/>
    <property type="molecule type" value="mRNA"/>
</dbReference>
<dbReference type="EMBL" id="AY286306">
    <property type="protein sequence ID" value="AAP92372.1"/>
    <property type="molecule type" value="mRNA"/>
</dbReference>
<dbReference type="EMBL" id="AY286307">
    <property type="protein sequence ID" value="AAP92373.1"/>
    <property type="molecule type" value="mRNA"/>
</dbReference>
<dbReference type="EMBL" id="AF132967">
    <property type="protein sequence ID" value="AAD27742.1"/>
    <property type="status" value="ALT_FRAME"/>
    <property type="molecule type" value="mRNA"/>
</dbReference>
<dbReference type="EMBL" id="AK314004">
    <property type="protein sequence ID" value="BAG36716.1"/>
    <property type="status" value="ALT_INIT"/>
    <property type="molecule type" value="mRNA"/>
</dbReference>
<dbReference type="EMBL" id="AK300700">
    <property type="protein sequence ID" value="BAG62381.1"/>
    <property type="molecule type" value="mRNA"/>
</dbReference>
<dbReference type="EMBL" id="DB304061">
    <property type="status" value="NOT_ANNOTATED_CDS"/>
    <property type="molecule type" value="mRNA"/>
</dbReference>
<dbReference type="EMBL" id="AC114772">
    <property type="protein sequence ID" value="AAY14828.1"/>
    <property type="status" value="ALT_SEQ"/>
    <property type="molecule type" value="Genomic_DNA"/>
</dbReference>
<dbReference type="EMBL" id="CH471053">
    <property type="protein sequence ID" value="EAW99849.1"/>
    <property type="molecule type" value="Genomic_DNA"/>
</dbReference>
<dbReference type="EMBL" id="CH471053">
    <property type="protein sequence ID" value="EAW99850.1"/>
    <property type="molecule type" value="Genomic_DNA"/>
</dbReference>
<dbReference type="EMBL" id="BC113692">
    <property type="protein sequence ID" value="AAI13693.1"/>
    <property type="molecule type" value="mRNA"/>
</dbReference>
<dbReference type="EMBL" id="BC113694">
    <property type="protein sequence ID" value="AAI13695.1"/>
    <property type="molecule type" value="mRNA"/>
</dbReference>
<dbReference type="CCDS" id="CCDS33217.1">
    <molecule id="Q9UMS0-1"/>
</dbReference>
<dbReference type="CCDS" id="CCDS42694.1">
    <molecule id="Q9UMS0-2"/>
</dbReference>
<dbReference type="CCDS" id="CCDS46315.1">
    <molecule id="Q9UMS0-3"/>
</dbReference>
<dbReference type="RefSeq" id="NP_001002755.1">
    <molecule id="Q9UMS0-1"/>
    <property type="nucleotide sequence ID" value="NM_001002755.4"/>
</dbReference>
<dbReference type="RefSeq" id="NP_001002756.1">
    <molecule id="Q9UMS0-2"/>
    <property type="nucleotide sequence ID" value="NM_001002756.2"/>
</dbReference>
<dbReference type="RefSeq" id="NP_001361213.1">
    <molecule id="Q9UMS0-3"/>
    <property type="nucleotide sequence ID" value="NM_001374284.1"/>
</dbReference>
<dbReference type="RefSeq" id="NP_056515.2">
    <molecule id="Q9UMS0-3"/>
    <property type="nucleotide sequence ID" value="NM_015700.4"/>
</dbReference>
<dbReference type="RefSeq" id="XP_016859297.1">
    <property type="nucleotide sequence ID" value="XM_017003808.1"/>
</dbReference>
<dbReference type="RefSeq" id="XP_047299895.1">
    <molecule id="Q9UMS0-3"/>
    <property type="nucleotide sequence ID" value="XM_047443939.1"/>
</dbReference>
<dbReference type="PDB" id="2LTM">
    <property type="method" value="NMR"/>
    <property type="chains" value="A=59-155"/>
</dbReference>
<dbReference type="PDB" id="2M5O">
    <property type="method" value="NMR"/>
    <property type="chains" value="A=162-247"/>
</dbReference>
<dbReference type="PDBsum" id="2LTM"/>
<dbReference type="PDBsum" id="2M5O"/>
<dbReference type="BMRB" id="Q9UMS0"/>
<dbReference type="SASBDB" id="Q9UMS0"/>
<dbReference type="SMR" id="Q9UMS0"/>
<dbReference type="BioGRID" id="118095">
    <property type="interactions" value="57"/>
</dbReference>
<dbReference type="FunCoup" id="Q9UMS0">
    <property type="interactions" value="2527"/>
</dbReference>
<dbReference type="IntAct" id="Q9UMS0">
    <property type="interactions" value="29"/>
</dbReference>
<dbReference type="MINT" id="Q9UMS0"/>
<dbReference type="STRING" id="9606.ENSP00000387219"/>
<dbReference type="GlyGen" id="Q9UMS0">
    <property type="glycosylation" value="2 sites, 1 O-linked glycan (1 site)"/>
</dbReference>
<dbReference type="iPTMnet" id="Q9UMS0"/>
<dbReference type="MetOSite" id="Q9UMS0"/>
<dbReference type="PhosphoSitePlus" id="Q9UMS0"/>
<dbReference type="BioMuta" id="NFU1"/>
<dbReference type="DMDM" id="205371805"/>
<dbReference type="jPOST" id="Q9UMS0"/>
<dbReference type="MassIVE" id="Q9UMS0"/>
<dbReference type="PaxDb" id="9606-ENSP00000387219"/>
<dbReference type="PeptideAtlas" id="Q9UMS0"/>
<dbReference type="ProteomicsDB" id="85204">
    <molecule id="Q9UMS0-1"/>
</dbReference>
<dbReference type="ProteomicsDB" id="85205">
    <molecule id="Q9UMS0-2"/>
</dbReference>
<dbReference type="ProteomicsDB" id="85206">
    <molecule id="Q9UMS0-3"/>
</dbReference>
<dbReference type="Pumba" id="Q9UMS0"/>
<dbReference type="Antibodypedia" id="48139">
    <property type="antibodies" value="46 antibodies from 18 providers"/>
</dbReference>
<dbReference type="DNASU" id="27247"/>
<dbReference type="Ensembl" id="ENST00000303698.7">
    <molecule id="Q9UMS0-3"/>
    <property type="protein sequence ID" value="ENSP00000306965.3"/>
    <property type="gene ID" value="ENSG00000169599.13"/>
</dbReference>
<dbReference type="Ensembl" id="ENST00000394305.5">
    <molecule id="Q9UMS0-2"/>
    <property type="protein sequence ID" value="ENSP00000377842.1"/>
    <property type="gene ID" value="ENSG00000169599.13"/>
</dbReference>
<dbReference type="Ensembl" id="ENST00000410022.7">
    <molecule id="Q9UMS0-1"/>
    <property type="protein sequence ID" value="ENSP00000387219.3"/>
    <property type="gene ID" value="ENSG00000169599.13"/>
</dbReference>
<dbReference type="Ensembl" id="ENST00000462320.5">
    <molecule id="Q9UMS0-2"/>
    <property type="protein sequence ID" value="ENSP00000418598.1"/>
    <property type="gene ID" value="ENSG00000169599.13"/>
</dbReference>
<dbReference type="GeneID" id="27247"/>
<dbReference type="KEGG" id="hsa:27247"/>
<dbReference type="MANE-Select" id="ENST00000410022.7">
    <property type="protein sequence ID" value="ENSP00000387219.3"/>
    <property type="RefSeq nucleotide sequence ID" value="NM_001002755.4"/>
    <property type="RefSeq protein sequence ID" value="NP_001002755.1"/>
</dbReference>
<dbReference type="UCSC" id="uc002sfj.4">
    <molecule id="Q9UMS0-1"/>
    <property type="organism name" value="human"/>
</dbReference>
<dbReference type="AGR" id="HGNC:16287"/>
<dbReference type="CTD" id="27247"/>
<dbReference type="DisGeNET" id="27247"/>
<dbReference type="GeneCards" id="NFU1"/>
<dbReference type="HGNC" id="HGNC:16287">
    <property type="gene designation" value="NFU1"/>
</dbReference>
<dbReference type="HPA" id="ENSG00000169599">
    <property type="expression patterns" value="Low tissue specificity"/>
</dbReference>
<dbReference type="MalaCards" id="NFU1"/>
<dbReference type="MIM" id="605711">
    <property type="type" value="phenotype"/>
</dbReference>
<dbReference type="MIM" id="608100">
    <property type="type" value="gene"/>
</dbReference>
<dbReference type="MIM" id="620938">
    <property type="type" value="phenotype"/>
</dbReference>
<dbReference type="neXtProt" id="NX_Q9UMS0"/>
<dbReference type="OpenTargets" id="ENSG00000169599"/>
<dbReference type="Orphanet" id="401869">
    <property type="disease" value="Multiple mitochondrial dysfunctions syndrome type 1"/>
</dbReference>
<dbReference type="PharmGKB" id="PA162397454"/>
<dbReference type="VEuPathDB" id="HostDB:ENSG00000169599"/>
<dbReference type="eggNOG" id="KOG2358">
    <property type="taxonomic scope" value="Eukaryota"/>
</dbReference>
<dbReference type="GeneTree" id="ENSGT00390000011296"/>
<dbReference type="HOGENOM" id="CLU_060555_0_2_1"/>
<dbReference type="InParanoid" id="Q9UMS0"/>
<dbReference type="OMA" id="AIMEHYM"/>
<dbReference type="OrthoDB" id="565552at2759"/>
<dbReference type="PAN-GO" id="Q9UMS0">
    <property type="GO annotations" value="5 GO annotations based on evolutionary models"/>
</dbReference>
<dbReference type="PhylomeDB" id="Q9UMS0"/>
<dbReference type="TreeFam" id="TF315076"/>
<dbReference type="PathwayCommons" id="Q9UMS0"/>
<dbReference type="Reactome" id="R-HSA-9857492">
    <property type="pathway name" value="Protein lipoylation"/>
</dbReference>
<dbReference type="SignaLink" id="Q9UMS0"/>
<dbReference type="BioGRID-ORCS" id="27247">
    <property type="hits" value="89 hits in 1157 CRISPR screens"/>
</dbReference>
<dbReference type="ChiTaRS" id="NFU1">
    <property type="organism name" value="human"/>
</dbReference>
<dbReference type="EvolutionaryTrace" id="Q9UMS0"/>
<dbReference type="GenomeRNAi" id="27247"/>
<dbReference type="Pharos" id="Q9UMS0">
    <property type="development level" value="Tbio"/>
</dbReference>
<dbReference type="PRO" id="PR:Q9UMS0"/>
<dbReference type="Proteomes" id="UP000005640">
    <property type="component" value="Chromosome 2"/>
</dbReference>
<dbReference type="RNAct" id="Q9UMS0">
    <property type="molecule type" value="protein"/>
</dbReference>
<dbReference type="Bgee" id="ENSG00000169599">
    <property type="expression patterns" value="Expressed in heart right ventricle and 204 other cell types or tissues"/>
</dbReference>
<dbReference type="ExpressionAtlas" id="Q9UMS0">
    <property type="expression patterns" value="baseline and differential"/>
</dbReference>
<dbReference type="GO" id="GO:0005829">
    <property type="term" value="C:cytosol"/>
    <property type="evidence" value="ECO:0000314"/>
    <property type="project" value="HPA"/>
</dbReference>
<dbReference type="GO" id="GO:0005759">
    <property type="term" value="C:mitochondrial matrix"/>
    <property type="evidence" value="ECO:0000304"/>
    <property type="project" value="Reactome"/>
</dbReference>
<dbReference type="GO" id="GO:0005739">
    <property type="term" value="C:mitochondrion"/>
    <property type="evidence" value="ECO:0000314"/>
    <property type="project" value="UniProtKB"/>
</dbReference>
<dbReference type="GO" id="GO:0005654">
    <property type="term" value="C:nucleoplasm"/>
    <property type="evidence" value="ECO:0000314"/>
    <property type="project" value="HPA"/>
</dbReference>
<dbReference type="GO" id="GO:0005634">
    <property type="term" value="C:nucleus"/>
    <property type="evidence" value="ECO:0000314"/>
    <property type="project" value="UniProtKB"/>
</dbReference>
<dbReference type="GO" id="GO:0051537">
    <property type="term" value="F:2 iron, 2 sulfur cluster binding"/>
    <property type="evidence" value="ECO:0000314"/>
    <property type="project" value="FlyBase"/>
</dbReference>
<dbReference type="GO" id="GO:0051539">
    <property type="term" value="F:4 iron, 4 sulfur cluster binding"/>
    <property type="evidence" value="ECO:0000314"/>
    <property type="project" value="UniProtKB"/>
</dbReference>
<dbReference type="GO" id="GO:0005506">
    <property type="term" value="F:iron ion binding"/>
    <property type="evidence" value="ECO:0000314"/>
    <property type="project" value="UniProtKB"/>
</dbReference>
<dbReference type="GO" id="GO:0016226">
    <property type="term" value="P:iron-sulfur cluster assembly"/>
    <property type="evidence" value="ECO:0000314"/>
    <property type="project" value="UniProtKB"/>
</dbReference>
<dbReference type="GO" id="GO:0051604">
    <property type="term" value="P:protein maturation"/>
    <property type="evidence" value="ECO:0000314"/>
    <property type="project" value="FlyBase"/>
</dbReference>
<dbReference type="FunFam" id="3.30.300.130:FF:000001">
    <property type="entry name" value="NFU1 iron-sulfur cluster scaffold"/>
    <property type="match status" value="1"/>
</dbReference>
<dbReference type="FunFam" id="3.30.1370.70:FF:000002">
    <property type="entry name" value="NFU1 iron-sulfur cluster scaffold homolog, mitochondrial"/>
    <property type="match status" value="1"/>
</dbReference>
<dbReference type="Gene3D" id="3.30.300.130">
    <property type="entry name" value="Fe-S cluster assembly (FSCA)"/>
    <property type="match status" value="1"/>
</dbReference>
<dbReference type="Gene3D" id="3.30.1370.70">
    <property type="entry name" value="Scaffold protein Nfu/NifU, N-terminal domain"/>
    <property type="match status" value="1"/>
</dbReference>
<dbReference type="InterPro" id="IPR034904">
    <property type="entry name" value="FSCA_dom_sf"/>
</dbReference>
<dbReference type="InterPro" id="IPR014824">
    <property type="entry name" value="Nfu/NifU_N"/>
</dbReference>
<dbReference type="InterPro" id="IPR036498">
    <property type="entry name" value="Nfu/NifU_N_sf"/>
</dbReference>
<dbReference type="InterPro" id="IPR001075">
    <property type="entry name" value="NIF_FeS_clus_asmbl_NifU_C"/>
</dbReference>
<dbReference type="PANTHER" id="PTHR11178">
    <property type="entry name" value="IRON-SULFUR CLUSTER SCAFFOLD PROTEIN NFU-RELATED"/>
    <property type="match status" value="1"/>
</dbReference>
<dbReference type="PANTHER" id="PTHR11178:SF1">
    <property type="entry name" value="NFU1 IRON-SULFUR CLUSTER SCAFFOLD HOMOLOG, MITOCHONDRIAL"/>
    <property type="match status" value="1"/>
</dbReference>
<dbReference type="Pfam" id="PF08712">
    <property type="entry name" value="Nfu_N"/>
    <property type="match status" value="1"/>
</dbReference>
<dbReference type="Pfam" id="PF01106">
    <property type="entry name" value="NifU"/>
    <property type="match status" value="1"/>
</dbReference>
<dbReference type="SMART" id="SM00932">
    <property type="entry name" value="Nfu_N"/>
    <property type="match status" value="1"/>
</dbReference>
<dbReference type="SUPFAM" id="SSF117916">
    <property type="entry name" value="Fe-S cluster assembly (FSCA) domain-like"/>
    <property type="match status" value="1"/>
</dbReference>
<dbReference type="SUPFAM" id="SSF110836">
    <property type="entry name" value="Hypothetical protein SAV1430"/>
    <property type="match status" value="1"/>
</dbReference>